<organism>
    <name type="scientific">Paracidovorax citrulli (strain AAC00-1)</name>
    <name type="common">Acidovorax citrulli</name>
    <dbReference type="NCBI Taxonomy" id="397945"/>
    <lineage>
        <taxon>Bacteria</taxon>
        <taxon>Pseudomonadati</taxon>
        <taxon>Pseudomonadota</taxon>
        <taxon>Betaproteobacteria</taxon>
        <taxon>Burkholderiales</taxon>
        <taxon>Comamonadaceae</taxon>
        <taxon>Paracidovorax</taxon>
    </lineage>
</organism>
<protein>
    <recommendedName>
        <fullName evidence="1">Threonine--tRNA ligase</fullName>
        <ecNumber evidence="1">6.1.1.3</ecNumber>
    </recommendedName>
    <alternativeName>
        <fullName evidence="1">Threonyl-tRNA synthetase</fullName>
        <shortName evidence="1">ThrRS</shortName>
    </alternativeName>
</protein>
<feature type="chain" id="PRO_1000020329" description="Threonine--tRNA ligase">
    <location>
        <begin position="1"/>
        <end position="639"/>
    </location>
</feature>
<feature type="domain" description="TGS" evidence="2">
    <location>
        <begin position="1"/>
        <end position="61"/>
    </location>
</feature>
<feature type="region of interest" description="Catalytic" evidence="1">
    <location>
        <begin position="242"/>
        <end position="533"/>
    </location>
</feature>
<feature type="binding site" evidence="1">
    <location>
        <position position="333"/>
    </location>
    <ligand>
        <name>Zn(2+)</name>
        <dbReference type="ChEBI" id="CHEBI:29105"/>
    </ligand>
</feature>
<feature type="binding site" evidence="1">
    <location>
        <position position="384"/>
    </location>
    <ligand>
        <name>Zn(2+)</name>
        <dbReference type="ChEBI" id="CHEBI:29105"/>
    </ligand>
</feature>
<feature type="binding site" evidence="1">
    <location>
        <position position="510"/>
    </location>
    <ligand>
        <name>Zn(2+)</name>
        <dbReference type="ChEBI" id="CHEBI:29105"/>
    </ligand>
</feature>
<gene>
    <name evidence="1" type="primary">thrS</name>
    <name type="ordered locus">Aave_2859</name>
</gene>
<keyword id="KW-0030">Aminoacyl-tRNA synthetase</keyword>
<keyword id="KW-0067">ATP-binding</keyword>
<keyword id="KW-0963">Cytoplasm</keyword>
<keyword id="KW-0436">Ligase</keyword>
<keyword id="KW-0479">Metal-binding</keyword>
<keyword id="KW-0547">Nucleotide-binding</keyword>
<keyword id="KW-0648">Protein biosynthesis</keyword>
<keyword id="KW-0694">RNA-binding</keyword>
<keyword id="KW-0820">tRNA-binding</keyword>
<keyword id="KW-0862">Zinc</keyword>
<accession>A1TR39</accession>
<evidence type="ECO:0000255" key="1">
    <source>
        <dbReference type="HAMAP-Rule" id="MF_00184"/>
    </source>
</evidence>
<evidence type="ECO:0000255" key="2">
    <source>
        <dbReference type="PROSITE-ProRule" id="PRU01228"/>
    </source>
</evidence>
<name>SYT_PARC0</name>
<comment type="function">
    <text evidence="1">Catalyzes the attachment of threonine to tRNA(Thr) in a two-step reaction: L-threonine is first activated by ATP to form Thr-AMP and then transferred to the acceptor end of tRNA(Thr). Also edits incorrectly charged L-seryl-tRNA(Thr).</text>
</comment>
<comment type="catalytic activity">
    <reaction evidence="1">
        <text>tRNA(Thr) + L-threonine + ATP = L-threonyl-tRNA(Thr) + AMP + diphosphate + H(+)</text>
        <dbReference type="Rhea" id="RHEA:24624"/>
        <dbReference type="Rhea" id="RHEA-COMP:9670"/>
        <dbReference type="Rhea" id="RHEA-COMP:9704"/>
        <dbReference type="ChEBI" id="CHEBI:15378"/>
        <dbReference type="ChEBI" id="CHEBI:30616"/>
        <dbReference type="ChEBI" id="CHEBI:33019"/>
        <dbReference type="ChEBI" id="CHEBI:57926"/>
        <dbReference type="ChEBI" id="CHEBI:78442"/>
        <dbReference type="ChEBI" id="CHEBI:78534"/>
        <dbReference type="ChEBI" id="CHEBI:456215"/>
        <dbReference type="EC" id="6.1.1.3"/>
    </reaction>
</comment>
<comment type="cofactor">
    <cofactor evidence="1">
        <name>Zn(2+)</name>
        <dbReference type="ChEBI" id="CHEBI:29105"/>
    </cofactor>
    <text evidence="1">Binds 1 zinc ion per subunit.</text>
</comment>
<comment type="subunit">
    <text evidence="1">Homodimer.</text>
</comment>
<comment type="subcellular location">
    <subcellularLocation>
        <location evidence="1">Cytoplasm</location>
    </subcellularLocation>
</comment>
<comment type="similarity">
    <text evidence="1">Belongs to the class-II aminoacyl-tRNA synthetase family.</text>
</comment>
<proteinExistence type="inferred from homology"/>
<sequence length="639" mass="73115">MIRITLPDNSQREYAGPVSVADVAQSIGPGLAKMTVAGKVDGRLVDASDVIDHDARLQIITPWDQEGVEIIRHSCAHLVGHAVKQLYPTAKMVIGPVIEEGFYYDIAYERPFTPEDLAAIEQRMKELIAQDYDVVKKMTPRDEVIQVFRERGEEYKLRLVEDMPDEKAMGLYYHQEYVDMCRGPHVPNTRFLKVFKLTRVSGAYWRGDARNEQLQRIYGTAWADKKDLEAYVKRIEEAEKRDHRRLGRELDLFHIDEHSPGTVFWHPKGWTIWQGVEQYMRQVYRDNGYQEVKGPQILDKHLWEKTGHWDKYRENMFTTESEKHDYALKPMNCPGHILIFNQGVKSYRDLPLRYGEFGQCHRNEPTGGLHGIMRVRAFTQDDGHIFCTEDQIQQECINFTALLQKVYKDFGFTDIIYKVATRPEKRIGSEESWDKAENALIESLKASGCDYQIAVGDGAFYGPKLEYTLRDAIGRHWQCGTIQVDPSMPERLGAEYVGEDGQRHRPIVLHRAIVGSLERFIGILIEQHAGALPVWLAPVQVAVLNITGAQDDYCREIAAKLQKALPNQGLRVELDLRNEKITYKIREHSLQKLPYILVVGDKEKAAGAVAVRARGNRDLGVMPLEAFISLIGQDIADKV</sequence>
<dbReference type="EC" id="6.1.1.3" evidence="1"/>
<dbReference type="EMBL" id="CP000512">
    <property type="protein sequence ID" value="ABM33427.1"/>
    <property type="molecule type" value="Genomic_DNA"/>
</dbReference>
<dbReference type="RefSeq" id="WP_011795948.1">
    <property type="nucleotide sequence ID" value="NC_008752.1"/>
</dbReference>
<dbReference type="SMR" id="A1TR39"/>
<dbReference type="STRING" id="397945.Aave_2859"/>
<dbReference type="KEGG" id="aav:Aave_2859"/>
<dbReference type="eggNOG" id="COG0441">
    <property type="taxonomic scope" value="Bacteria"/>
</dbReference>
<dbReference type="HOGENOM" id="CLU_008554_0_1_4"/>
<dbReference type="OrthoDB" id="9802304at2"/>
<dbReference type="Proteomes" id="UP000002596">
    <property type="component" value="Chromosome"/>
</dbReference>
<dbReference type="GO" id="GO:0005829">
    <property type="term" value="C:cytosol"/>
    <property type="evidence" value="ECO:0007669"/>
    <property type="project" value="TreeGrafter"/>
</dbReference>
<dbReference type="GO" id="GO:0005524">
    <property type="term" value="F:ATP binding"/>
    <property type="evidence" value="ECO:0007669"/>
    <property type="project" value="UniProtKB-UniRule"/>
</dbReference>
<dbReference type="GO" id="GO:0046872">
    <property type="term" value="F:metal ion binding"/>
    <property type="evidence" value="ECO:0007669"/>
    <property type="project" value="UniProtKB-KW"/>
</dbReference>
<dbReference type="GO" id="GO:0004829">
    <property type="term" value="F:threonine-tRNA ligase activity"/>
    <property type="evidence" value="ECO:0007669"/>
    <property type="project" value="UniProtKB-UniRule"/>
</dbReference>
<dbReference type="GO" id="GO:0000049">
    <property type="term" value="F:tRNA binding"/>
    <property type="evidence" value="ECO:0007669"/>
    <property type="project" value="UniProtKB-KW"/>
</dbReference>
<dbReference type="GO" id="GO:0006435">
    <property type="term" value="P:threonyl-tRNA aminoacylation"/>
    <property type="evidence" value="ECO:0007669"/>
    <property type="project" value="UniProtKB-UniRule"/>
</dbReference>
<dbReference type="CDD" id="cd01667">
    <property type="entry name" value="TGS_ThrRS"/>
    <property type="match status" value="1"/>
</dbReference>
<dbReference type="CDD" id="cd00860">
    <property type="entry name" value="ThrRS_anticodon"/>
    <property type="match status" value="1"/>
</dbReference>
<dbReference type="CDD" id="cd00771">
    <property type="entry name" value="ThrRS_core"/>
    <property type="match status" value="1"/>
</dbReference>
<dbReference type="FunFam" id="3.10.20.30:FF:000005">
    <property type="entry name" value="Threonine--tRNA ligase"/>
    <property type="match status" value="1"/>
</dbReference>
<dbReference type="FunFam" id="3.30.54.20:FF:000002">
    <property type="entry name" value="Threonine--tRNA ligase"/>
    <property type="match status" value="1"/>
</dbReference>
<dbReference type="FunFam" id="3.30.930.10:FF:000002">
    <property type="entry name" value="Threonine--tRNA ligase"/>
    <property type="match status" value="1"/>
</dbReference>
<dbReference type="FunFam" id="3.40.50.800:FF:000001">
    <property type="entry name" value="Threonine--tRNA ligase"/>
    <property type="match status" value="1"/>
</dbReference>
<dbReference type="FunFam" id="3.30.980.10:FF:000005">
    <property type="entry name" value="Threonyl-tRNA synthetase, mitochondrial"/>
    <property type="match status" value="1"/>
</dbReference>
<dbReference type="Gene3D" id="3.10.20.30">
    <property type="match status" value="1"/>
</dbReference>
<dbReference type="Gene3D" id="3.30.54.20">
    <property type="match status" value="1"/>
</dbReference>
<dbReference type="Gene3D" id="3.40.50.800">
    <property type="entry name" value="Anticodon-binding domain"/>
    <property type="match status" value="1"/>
</dbReference>
<dbReference type="Gene3D" id="3.30.930.10">
    <property type="entry name" value="Bira Bifunctional Protein, Domain 2"/>
    <property type="match status" value="1"/>
</dbReference>
<dbReference type="Gene3D" id="3.30.980.10">
    <property type="entry name" value="Threonyl-trna Synthetase, Chain A, domain 2"/>
    <property type="match status" value="1"/>
</dbReference>
<dbReference type="HAMAP" id="MF_00184">
    <property type="entry name" value="Thr_tRNA_synth"/>
    <property type="match status" value="1"/>
</dbReference>
<dbReference type="InterPro" id="IPR002314">
    <property type="entry name" value="aa-tRNA-synt_IIb"/>
</dbReference>
<dbReference type="InterPro" id="IPR006195">
    <property type="entry name" value="aa-tRNA-synth_II"/>
</dbReference>
<dbReference type="InterPro" id="IPR045864">
    <property type="entry name" value="aa-tRNA-synth_II/BPL/LPL"/>
</dbReference>
<dbReference type="InterPro" id="IPR004154">
    <property type="entry name" value="Anticodon-bd"/>
</dbReference>
<dbReference type="InterPro" id="IPR036621">
    <property type="entry name" value="Anticodon-bd_dom_sf"/>
</dbReference>
<dbReference type="InterPro" id="IPR012675">
    <property type="entry name" value="Beta-grasp_dom_sf"/>
</dbReference>
<dbReference type="InterPro" id="IPR004095">
    <property type="entry name" value="TGS"/>
</dbReference>
<dbReference type="InterPro" id="IPR012676">
    <property type="entry name" value="TGS-like"/>
</dbReference>
<dbReference type="InterPro" id="IPR002320">
    <property type="entry name" value="Thr-tRNA-ligase_IIa"/>
</dbReference>
<dbReference type="InterPro" id="IPR018163">
    <property type="entry name" value="Thr/Ala-tRNA-synth_IIc_edit"/>
</dbReference>
<dbReference type="InterPro" id="IPR047246">
    <property type="entry name" value="ThrRS_anticodon"/>
</dbReference>
<dbReference type="InterPro" id="IPR033728">
    <property type="entry name" value="ThrRS_core"/>
</dbReference>
<dbReference type="InterPro" id="IPR012947">
    <property type="entry name" value="tRNA_SAD"/>
</dbReference>
<dbReference type="NCBIfam" id="TIGR00418">
    <property type="entry name" value="thrS"/>
    <property type="match status" value="1"/>
</dbReference>
<dbReference type="PANTHER" id="PTHR11451:SF44">
    <property type="entry name" value="THREONINE--TRNA LIGASE, CHLOROPLASTIC_MITOCHONDRIAL 2"/>
    <property type="match status" value="1"/>
</dbReference>
<dbReference type="PANTHER" id="PTHR11451">
    <property type="entry name" value="THREONINE-TRNA LIGASE"/>
    <property type="match status" value="1"/>
</dbReference>
<dbReference type="Pfam" id="PF03129">
    <property type="entry name" value="HGTP_anticodon"/>
    <property type="match status" value="1"/>
</dbReference>
<dbReference type="Pfam" id="PF02824">
    <property type="entry name" value="TGS"/>
    <property type="match status" value="1"/>
</dbReference>
<dbReference type="Pfam" id="PF00587">
    <property type="entry name" value="tRNA-synt_2b"/>
    <property type="match status" value="1"/>
</dbReference>
<dbReference type="Pfam" id="PF07973">
    <property type="entry name" value="tRNA_SAD"/>
    <property type="match status" value="1"/>
</dbReference>
<dbReference type="PRINTS" id="PR01047">
    <property type="entry name" value="TRNASYNTHTHR"/>
</dbReference>
<dbReference type="SMART" id="SM00863">
    <property type="entry name" value="tRNA_SAD"/>
    <property type="match status" value="1"/>
</dbReference>
<dbReference type="SUPFAM" id="SSF52954">
    <property type="entry name" value="Class II aaRS ABD-related"/>
    <property type="match status" value="1"/>
</dbReference>
<dbReference type="SUPFAM" id="SSF55681">
    <property type="entry name" value="Class II aaRS and biotin synthetases"/>
    <property type="match status" value="1"/>
</dbReference>
<dbReference type="SUPFAM" id="SSF81271">
    <property type="entry name" value="TGS-like"/>
    <property type="match status" value="1"/>
</dbReference>
<dbReference type="SUPFAM" id="SSF55186">
    <property type="entry name" value="ThrRS/AlaRS common domain"/>
    <property type="match status" value="1"/>
</dbReference>
<dbReference type="PROSITE" id="PS50862">
    <property type="entry name" value="AA_TRNA_LIGASE_II"/>
    <property type="match status" value="1"/>
</dbReference>
<dbReference type="PROSITE" id="PS51880">
    <property type="entry name" value="TGS"/>
    <property type="match status" value="1"/>
</dbReference>
<reference key="1">
    <citation type="submission" date="2006-12" db="EMBL/GenBank/DDBJ databases">
        <title>Complete sequence of Acidovorax avenae subsp. citrulli AAC00-1.</title>
        <authorList>
            <person name="Copeland A."/>
            <person name="Lucas S."/>
            <person name="Lapidus A."/>
            <person name="Barry K."/>
            <person name="Detter J.C."/>
            <person name="Glavina del Rio T."/>
            <person name="Dalin E."/>
            <person name="Tice H."/>
            <person name="Pitluck S."/>
            <person name="Kiss H."/>
            <person name="Brettin T."/>
            <person name="Bruce D."/>
            <person name="Han C."/>
            <person name="Tapia R."/>
            <person name="Gilna P."/>
            <person name="Schmutz J."/>
            <person name="Larimer F."/>
            <person name="Land M."/>
            <person name="Hauser L."/>
            <person name="Kyrpides N."/>
            <person name="Kim E."/>
            <person name="Stahl D."/>
            <person name="Richardson P."/>
        </authorList>
    </citation>
    <scope>NUCLEOTIDE SEQUENCE [LARGE SCALE GENOMIC DNA]</scope>
    <source>
        <strain>AAC00-1</strain>
    </source>
</reference>